<reference key="1">
    <citation type="journal article" date="2008" name="J. Bacteriol.">
        <title>The complete genome sequence of Escherichia coli DH10B: insights into the biology of a laboratory workhorse.</title>
        <authorList>
            <person name="Durfee T."/>
            <person name="Nelson R."/>
            <person name="Baldwin S."/>
            <person name="Plunkett G. III"/>
            <person name="Burland V."/>
            <person name="Mau B."/>
            <person name="Petrosino J.F."/>
            <person name="Qin X."/>
            <person name="Muzny D.M."/>
            <person name="Ayele M."/>
            <person name="Gibbs R.A."/>
            <person name="Csorgo B."/>
            <person name="Posfai G."/>
            <person name="Weinstock G.M."/>
            <person name="Blattner F.R."/>
        </authorList>
    </citation>
    <scope>NUCLEOTIDE SEQUENCE [LARGE SCALE GENOMIC DNA]</scope>
    <source>
        <strain>K12 / DH10B</strain>
    </source>
</reference>
<name>YEJL_ECODH</name>
<organism>
    <name type="scientific">Escherichia coli (strain K12 / DH10B)</name>
    <dbReference type="NCBI Taxonomy" id="316385"/>
    <lineage>
        <taxon>Bacteria</taxon>
        <taxon>Pseudomonadati</taxon>
        <taxon>Pseudomonadota</taxon>
        <taxon>Gammaproteobacteria</taxon>
        <taxon>Enterobacterales</taxon>
        <taxon>Enterobacteriaceae</taxon>
        <taxon>Escherichia</taxon>
    </lineage>
</organism>
<feature type="chain" id="PRO_1000199582" description="UPF0352 protein YejL">
    <location>
        <begin position="1"/>
        <end position="75"/>
    </location>
</feature>
<dbReference type="EMBL" id="CP000948">
    <property type="protein sequence ID" value="ACB03351.1"/>
    <property type="molecule type" value="Genomic_DNA"/>
</dbReference>
<dbReference type="RefSeq" id="WP_001135667.1">
    <property type="nucleotide sequence ID" value="NC_010473.1"/>
</dbReference>
<dbReference type="BMRB" id="B1X885"/>
<dbReference type="SMR" id="B1X885"/>
<dbReference type="KEGG" id="ecd:ECDH10B_2345"/>
<dbReference type="HOGENOM" id="CLU_175457_0_0_6"/>
<dbReference type="FunFam" id="1.10.3390.10:FF:000001">
    <property type="entry name" value="UPF0352 protein YejL"/>
    <property type="match status" value="1"/>
</dbReference>
<dbReference type="Gene3D" id="1.10.3390.10">
    <property type="entry name" value="YejL-like"/>
    <property type="match status" value="1"/>
</dbReference>
<dbReference type="HAMAP" id="MF_00816">
    <property type="entry name" value="UPF0352"/>
    <property type="match status" value="1"/>
</dbReference>
<dbReference type="InterPro" id="IPR009857">
    <property type="entry name" value="UPF0352"/>
</dbReference>
<dbReference type="InterPro" id="IPR023202">
    <property type="entry name" value="YejL_sf"/>
</dbReference>
<dbReference type="NCBIfam" id="NF010242">
    <property type="entry name" value="PRK13689.1"/>
    <property type="match status" value="1"/>
</dbReference>
<dbReference type="Pfam" id="PF07208">
    <property type="entry name" value="DUF1414"/>
    <property type="match status" value="1"/>
</dbReference>
<dbReference type="PIRSF" id="PIRSF006188">
    <property type="entry name" value="UCP006188"/>
    <property type="match status" value="1"/>
</dbReference>
<dbReference type="SUPFAM" id="SSF158651">
    <property type="entry name" value="YejL-like"/>
    <property type="match status" value="1"/>
</dbReference>
<sequence>MPQISRYSDEQVEQLLAELLNVLEKHKAPTDLSLMVLGNMVTNLINTSIAPAQRQAIANSFARALQSSINEDKAH</sequence>
<gene>
    <name evidence="1" type="primary">yejL</name>
    <name type="ordered locus">ECDH10B_2345</name>
</gene>
<proteinExistence type="inferred from homology"/>
<accession>B1X885</accession>
<evidence type="ECO:0000255" key="1">
    <source>
        <dbReference type="HAMAP-Rule" id="MF_00816"/>
    </source>
</evidence>
<comment type="similarity">
    <text evidence="1">Belongs to the UPF0352 family.</text>
</comment>
<protein>
    <recommendedName>
        <fullName evidence="1">UPF0352 protein YejL</fullName>
    </recommendedName>
</protein>